<name>DCAKD_HUMAN</name>
<protein>
    <recommendedName>
        <fullName>Dephospho-CoA kinase domain-containing protein</fullName>
    </recommendedName>
</protein>
<accession>Q8WVC6</accession>
<accession>A8K3Z0</accession>
<accession>D3DX60</accession>
<accession>D3DX62</accession>
<accession>Q9BR71</accession>
<accession>Q9H5W1</accession>
<comment type="alternative products">
    <event type="alternative splicing"/>
    <isoform>
        <id>Q8WVC6-1</id>
        <name>1</name>
        <sequence type="displayed"/>
    </isoform>
    <isoform>
        <id>Q8WVC6-2</id>
        <name>2</name>
        <sequence type="described" ref="VSP_030810 VSP_030811"/>
    </isoform>
</comment>
<comment type="similarity">
    <text evidence="4">Belongs to the CoaE family.</text>
</comment>
<organism>
    <name type="scientific">Homo sapiens</name>
    <name type="common">Human</name>
    <dbReference type="NCBI Taxonomy" id="9606"/>
    <lineage>
        <taxon>Eukaryota</taxon>
        <taxon>Metazoa</taxon>
        <taxon>Chordata</taxon>
        <taxon>Craniata</taxon>
        <taxon>Vertebrata</taxon>
        <taxon>Euteleostomi</taxon>
        <taxon>Mammalia</taxon>
        <taxon>Eutheria</taxon>
        <taxon>Euarchontoglires</taxon>
        <taxon>Primates</taxon>
        <taxon>Haplorrhini</taxon>
        <taxon>Catarrhini</taxon>
        <taxon>Hominidae</taxon>
        <taxon>Homo</taxon>
    </lineage>
</organism>
<reference key="1">
    <citation type="journal article" date="2004" name="Nat. Genet.">
        <title>Complete sequencing and characterization of 21,243 full-length human cDNAs.</title>
        <authorList>
            <person name="Ota T."/>
            <person name="Suzuki Y."/>
            <person name="Nishikawa T."/>
            <person name="Otsuki T."/>
            <person name="Sugiyama T."/>
            <person name="Irie R."/>
            <person name="Wakamatsu A."/>
            <person name="Hayashi K."/>
            <person name="Sato H."/>
            <person name="Nagai K."/>
            <person name="Kimura K."/>
            <person name="Makita H."/>
            <person name="Sekine M."/>
            <person name="Obayashi M."/>
            <person name="Nishi T."/>
            <person name="Shibahara T."/>
            <person name="Tanaka T."/>
            <person name="Ishii S."/>
            <person name="Yamamoto J."/>
            <person name="Saito K."/>
            <person name="Kawai Y."/>
            <person name="Isono Y."/>
            <person name="Nakamura Y."/>
            <person name="Nagahari K."/>
            <person name="Murakami K."/>
            <person name="Yasuda T."/>
            <person name="Iwayanagi T."/>
            <person name="Wagatsuma M."/>
            <person name="Shiratori A."/>
            <person name="Sudo H."/>
            <person name="Hosoiri T."/>
            <person name="Kaku Y."/>
            <person name="Kodaira H."/>
            <person name="Kondo H."/>
            <person name="Sugawara M."/>
            <person name="Takahashi M."/>
            <person name="Kanda K."/>
            <person name="Yokoi T."/>
            <person name="Furuya T."/>
            <person name="Kikkawa E."/>
            <person name="Omura Y."/>
            <person name="Abe K."/>
            <person name="Kamihara K."/>
            <person name="Katsuta N."/>
            <person name="Sato K."/>
            <person name="Tanikawa M."/>
            <person name="Yamazaki M."/>
            <person name="Ninomiya K."/>
            <person name="Ishibashi T."/>
            <person name="Yamashita H."/>
            <person name="Murakawa K."/>
            <person name="Fujimori K."/>
            <person name="Tanai H."/>
            <person name="Kimata M."/>
            <person name="Watanabe M."/>
            <person name="Hiraoka S."/>
            <person name="Chiba Y."/>
            <person name="Ishida S."/>
            <person name="Ono Y."/>
            <person name="Takiguchi S."/>
            <person name="Watanabe S."/>
            <person name="Yosida M."/>
            <person name="Hotuta T."/>
            <person name="Kusano J."/>
            <person name="Kanehori K."/>
            <person name="Takahashi-Fujii A."/>
            <person name="Hara H."/>
            <person name="Tanase T.-O."/>
            <person name="Nomura Y."/>
            <person name="Togiya S."/>
            <person name="Komai F."/>
            <person name="Hara R."/>
            <person name="Takeuchi K."/>
            <person name="Arita M."/>
            <person name="Imose N."/>
            <person name="Musashino K."/>
            <person name="Yuuki H."/>
            <person name="Oshima A."/>
            <person name="Sasaki N."/>
            <person name="Aotsuka S."/>
            <person name="Yoshikawa Y."/>
            <person name="Matsunawa H."/>
            <person name="Ichihara T."/>
            <person name="Shiohata N."/>
            <person name="Sano S."/>
            <person name="Moriya S."/>
            <person name="Momiyama H."/>
            <person name="Satoh N."/>
            <person name="Takami S."/>
            <person name="Terashima Y."/>
            <person name="Suzuki O."/>
            <person name="Nakagawa S."/>
            <person name="Senoh A."/>
            <person name="Mizoguchi H."/>
            <person name="Goto Y."/>
            <person name="Shimizu F."/>
            <person name="Wakebe H."/>
            <person name="Hishigaki H."/>
            <person name="Watanabe T."/>
            <person name="Sugiyama A."/>
            <person name="Takemoto M."/>
            <person name="Kawakami B."/>
            <person name="Yamazaki M."/>
            <person name="Watanabe K."/>
            <person name="Kumagai A."/>
            <person name="Itakura S."/>
            <person name="Fukuzumi Y."/>
            <person name="Fujimori Y."/>
            <person name="Komiyama M."/>
            <person name="Tashiro H."/>
            <person name="Tanigami A."/>
            <person name="Fujiwara T."/>
            <person name="Ono T."/>
            <person name="Yamada K."/>
            <person name="Fujii Y."/>
            <person name="Ozaki K."/>
            <person name="Hirao M."/>
            <person name="Ohmori Y."/>
            <person name="Kawabata A."/>
            <person name="Hikiji T."/>
            <person name="Kobatake N."/>
            <person name="Inagaki H."/>
            <person name="Ikema Y."/>
            <person name="Okamoto S."/>
            <person name="Okitani R."/>
            <person name="Kawakami T."/>
            <person name="Noguchi S."/>
            <person name="Itoh T."/>
            <person name="Shigeta K."/>
            <person name="Senba T."/>
            <person name="Matsumura K."/>
            <person name="Nakajima Y."/>
            <person name="Mizuno T."/>
            <person name="Morinaga M."/>
            <person name="Sasaki M."/>
            <person name="Togashi T."/>
            <person name="Oyama M."/>
            <person name="Hata H."/>
            <person name="Watanabe M."/>
            <person name="Komatsu T."/>
            <person name="Mizushima-Sugano J."/>
            <person name="Satoh T."/>
            <person name="Shirai Y."/>
            <person name="Takahashi Y."/>
            <person name="Nakagawa K."/>
            <person name="Okumura K."/>
            <person name="Nagase T."/>
            <person name="Nomura N."/>
            <person name="Kikuchi H."/>
            <person name="Masuho Y."/>
            <person name="Yamashita R."/>
            <person name="Nakai K."/>
            <person name="Yada T."/>
            <person name="Nakamura Y."/>
            <person name="Ohara O."/>
            <person name="Isogai T."/>
            <person name="Sugano S."/>
        </authorList>
    </citation>
    <scope>NUCLEOTIDE SEQUENCE [LARGE SCALE MRNA] (ISOFORMS 1 AND 2)</scope>
</reference>
<reference key="2">
    <citation type="submission" date="2005-09" db="EMBL/GenBank/DDBJ databases">
        <authorList>
            <person name="Mural R.J."/>
            <person name="Istrail S."/>
            <person name="Sutton G.G."/>
            <person name="Florea L."/>
            <person name="Halpern A.L."/>
            <person name="Mobarry C.M."/>
            <person name="Lippert R."/>
            <person name="Walenz B."/>
            <person name="Shatkay H."/>
            <person name="Dew I."/>
            <person name="Miller J.R."/>
            <person name="Flanigan M.J."/>
            <person name="Edwards N.J."/>
            <person name="Bolanos R."/>
            <person name="Fasulo D."/>
            <person name="Halldorsson B.V."/>
            <person name="Hannenhalli S."/>
            <person name="Turner R."/>
            <person name="Yooseph S."/>
            <person name="Lu F."/>
            <person name="Nusskern D.R."/>
            <person name="Shue B.C."/>
            <person name="Zheng X.H."/>
            <person name="Zhong F."/>
            <person name="Delcher A.L."/>
            <person name="Huson D.H."/>
            <person name="Kravitz S.A."/>
            <person name="Mouchard L."/>
            <person name="Reinert K."/>
            <person name="Remington K.A."/>
            <person name="Clark A.G."/>
            <person name="Waterman M.S."/>
            <person name="Eichler E.E."/>
            <person name="Adams M.D."/>
            <person name="Hunkapiller M.W."/>
            <person name="Myers E.W."/>
            <person name="Venter J.C."/>
        </authorList>
    </citation>
    <scope>NUCLEOTIDE SEQUENCE [LARGE SCALE GENOMIC DNA]</scope>
</reference>
<reference key="3">
    <citation type="journal article" date="2004" name="Genome Res.">
        <title>The status, quality, and expansion of the NIH full-length cDNA project: the Mammalian Gene Collection (MGC).</title>
        <authorList>
            <consortium name="The MGC Project Team"/>
        </authorList>
    </citation>
    <scope>NUCLEOTIDE SEQUENCE [LARGE SCALE MRNA] (ISOFORM 1)</scope>
    <scope>VARIANT ILE-84</scope>
    <source>
        <tissue>Brain</tissue>
        <tissue>Lung</tissue>
        <tissue>Pancreas</tissue>
    </source>
</reference>
<reference key="4">
    <citation type="journal article" date="2011" name="BMC Syst. Biol.">
        <title>Initial characterization of the human central proteome.</title>
        <authorList>
            <person name="Burkard T.R."/>
            <person name="Planyavsky M."/>
            <person name="Kaupe I."/>
            <person name="Breitwieser F.P."/>
            <person name="Buerckstuemmer T."/>
            <person name="Bennett K.L."/>
            <person name="Superti-Furga G."/>
            <person name="Colinge J."/>
        </authorList>
    </citation>
    <scope>IDENTIFICATION BY MASS SPECTROMETRY [LARGE SCALE ANALYSIS]</scope>
</reference>
<reference key="5">
    <citation type="journal article" date="2015" name="Proteomics">
        <title>N-terminome analysis of the human mitochondrial proteome.</title>
        <authorList>
            <person name="Vaca Jacome A.S."/>
            <person name="Rabilloud T."/>
            <person name="Schaeffer-Reiss C."/>
            <person name="Rompais M."/>
            <person name="Ayoub D."/>
            <person name="Lane L."/>
            <person name="Bairoch A."/>
            <person name="Van Dorsselaer A."/>
            <person name="Carapito C."/>
        </authorList>
    </citation>
    <scope>IDENTIFICATION BY MASS SPECTROMETRY [LARGE SCALE ANALYSIS]</scope>
</reference>
<feature type="chain" id="PRO_0000316849" description="Dephospho-CoA kinase domain-containing protein">
    <location>
        <begin position="1"/>
        <end position="231"/>
    </location>
</feature>
<feature type="domain" description="DPCK">
    <location>
        <begin position="3"/>
        <end position="207"/>
    </location>
</feature>
<feature type="binding site" evidence="1">
    <location>
        <begin position="8"/>
        <end position="15"/>
    </location>
    <ligand>
        <name>ATP</name>
        <dbReference type="ChEBI" id="CHEBI:30616"/>
    </ligand>
</feature>
<feature type="splice variant" id="VSP_030810" description="In isoform 2." evidence="3">
    <original>GYRYVILDIPLLFETKKLLKYMKHTVV</original>
    <variation>EPRTSPRGKKHVPSALKEADSLMRRDT</variation>
    <location>
        <begin position="106"/>
        <end position="132"/>
    </location>
</feature>
<feature type="splice variant" id="VSP_030811" description="In isoform 2." evidence="3">
    <location>
        <begin position="133"/>
        <end position="231"/>
    </location>
</feature>
<feature type="sequence variant" id="VAR_038406" description="In dbSNP:rs17850104." evidence="2">
    <original>N</original>
    <variation>I</variation>
    <location>
        <position position="84"/>
    </location>
</feature>
<feature type="sequence conflict" description="In Ref. 1; BAF83444." evidence="4" ref="1">
    <original>S</original>
    <variation>N</variation>
    <location>
        <position position="218"/>
    </location>
</feature>
<sequence>MFLVGLTGGIASGKSSVIQVFQQLGCAVIDVDVMARHVVQPGYPAHRRIVEVFGTEVLLENGDINRKVLGDLIFNQPDRRQLLNAITHPEIRKEMMKETFKYFLRGYRYVILDIPLLFETKKLLKYMKHTVVVYCDRDTQLARLMRRNSLNRKDAEARINAQLPLTDKARMARHVLDNSGEWSVTKRQVILLHTELERSLEYLPLRFGVLTGLAAIASLLYLLTHYLLPYA</sequence>
<keyword id="KW-0025">Alternative splicing</keyword>
<keyword id="KW-0067">ATP-binding</keyword>
<keyword id="KW-0547">Nucleotide-binding</keyword>
<keyword id="KW-1267">Proteomics identification</keyword>
<keyword id="KW-1185">Reference proteome</keyword>
<proteinExistence type="evidence at protein level"/>
<evidence type="ECO:0000255" key="1"/>
<evidence type="ECO:0000269" key="2">
    <source>
    </source>
</evidence>
<evidence type="ECO:0000303" key="3">
    <source>
    </source>
</evidence>
<evidence type="ECO:0000305" key="4"/>
<dbReference type="EMBL" id="AK026608">
    <property type="protein sequence ID" value="BAB15508.1"/>
    <property type="molecule type" value="mRNA"/>
</dbReference>
<dbReference type="EMBL" id="AK290755">
    <property type="protein sequence ID" value="BAF83444.1"/>
    <property type="molecule type" value="mRNA"/>
</dbReference>
<dbReference type="EMBL" id="CH471178">
    <property type="protein sequence ID" value="EAW51558.1"/>
    <property type="molecule type" value="Genomic_DNA"/>
</dbReference>
<dbReference type="EMBL" id="CH471178">
    <property type="protein sequence ID" value="EAW51559.1"/>
    <property type="molecule type" value="Genomic_DNA"/>
</dbReference>
<dbReference type="EMBL" id="CH471178">
    <property type="protein sequence ID" value="EAW51560.1"/>
    <property type="molecule type" value="Genomic_DNA"/>
</dbReference>
<dbReference type="EMBL" id="CH471178">
    <property type="protein sequence ID" value="EAW51561.1"/>
    <property type="molecule type" value="Genomic_DNA"/>
</dbReference>
<dbReference type="EMBL" id="CH471178">
    <property type="protein sequence ID" value="EAW51562.1"/>
    <property type="molecule type" value="Genomic_DNA"/>
</dbReference>
<dbReference type="EMBL" id="BC006472">
    <property type="protein sequence ID" value="AAH06472.1"/>
    <property type="molecule type" value="mRNA"/>
</dbReference>
<dbReference type="EMBL" id="BC006546">
    <property type="protein sequence ID" value="AAH06546.1"/>
    <property type="molecule type" value="mRNA"/>
</dbReference>
<dbReference type="EMBL" id="BC018132">
    <property type="protein sequence ID" value="AAH18132.1"/>
    <property type="molecule type" value="mRNA"/>
</dbReference>
<dbReference type="EMBL" id="BC033299">
    <property type="protein sequence ID" value="AAH33299.1"/>
    <property type="molecule type" value="mRNA"/>
</dbReference>
<dbReference type="CCDS" id="CCDS11493.1">
    <molecule id="Q8WVC6-1"/>
</dbReference>
<dbReference type="RefSeq" id="NP_001122103.1">
    <molecule id="Q8WVC6-1"/>
    <property type="nucleotide sequence ID" value="NM_001128631.3"/>
</dbReference>
<dbReference type="RefSeq" id="NP_001275583.1">
    <molecule id="Q8WVC6-1"/>
    <property type="nucleotide sequence ID" value="NM_001288654.2"/>
</dbReference>
<dbReference type="RefSeq" id="NP_001275584.1">
    <molecule id="Q8WVC6-1"/>
    <property type="nucleotide sequence ID" value="NM_001288655.2"/>
</dbReference>
<dbReference type="RefSeq" id="NP_001308255.1">
    <molecule id="Q8WVC6-1"/>
    <property type="nucleotide sequence ID" value="NM_001321326.2"/>
</dbReference>
<dbReference type="RefSeq" id="NP_079095.3">
    <molecule id="Q8WVC6-1"/>
    <property type="nucleotide sequence ID" value="NM_024819.6"/>
</dbReference>
<dbReference type="RefSeq" id="XP_005257745.1">
    <molecule id="Q8WVC6-2"/>
    <property type="nucleotide sequence ID" value="XM_005257688.3"/>
</dbReference>
<dbReference type="RefSeq" id="XP_011523564.1">
    <molecule id="Q8WVC6-1"/>
    <property type="nucleotide sequence ID" value="XM_011525262.3"/>
</dbReference>
<dbReference type="RefSeq" id="XP_016880591.1">
    <property type="nucleotide sequence ID" value="XM_017025102.1"/>
</dbReference>
<dbReference type="RefSeq" id="XP_016880592.1">
    <molecule id="Q8WVC6-2"/>
    <property type="nucleotide sequence ID" value="XM_017025103.2"/>
</dbReference>
<dbReference type="RefSeq" id="XP_016880593.1">
    <property type="nucleotide sequence ID" value="XM_017025104.1"/>
</dbReference>
<dbReference type="RefSeq" id="XP_047292729.1">
    <molecule id="Q8WVC6-2"/>
    <property type="nucleotide sequence ID" value="XM_047436773.1"/>
</dbReference>
<dbReference type="RefSeq" id="XP_054173241.1">
    <molecule id="Q8WVC6-1"/>
    <property type="nucleotide sequence ID" value="XM_054317266.1"/>
</dbReference>
<dbReference type="RefSeq" id="XP_054173242.1">
    <molecule id="Q8WVC6-2"/>
    <property type="nucleotide sequence ID" value="XM_054317267.1"/>
</dbReference>
<dbReference type="RefSeq" id="XP_054173243.1">
    <molecule id="Q8WVC6-2"/>
    <property type="nucleotide sequence ID" value="XM_054317268.1"/>
</dbReference>
<dbReference type="RefSeq" id="XP_054173244.1">
    <molecule id="Q8WVC6-2"/>
    <property type="nucleotide sequence ID" value="XM_054317269.1"/>
</dbReference>
<dbReference type="RefSeq" id="XP_054173245.1">
    <molecule id="Q8WVC6-2"/>
    <property type="nucleotide sequence ID" value="XM_054317270.1"/>
</dbReference>
<dbReference type="SMR" id="Q8WVC6"/>
<dbReference type="BioGRID" id="122965">
    <property type="interactions" value="102"/>
</dbReference>
<dbReference type="FunCoup" id="Q8WVC6">
    <property type="interactions" value="667"/>
</dbReference>
<dbReference type="IntAct" id="Q8WVC6">
    <property type="interactions" value="63"/>
</dbReference>
<dbReference type="MINT" id="Q8WVC6"/>
<dbReference type="STRING" id="9606.ENSP00000498268"/>
<dbReference type="iPTMnet" id="Q8WVC6"/>
<dbReference type="PhosphoSitePlus" id="Q8WVC6"/>
<dbReference type="SwissPalm" id="Q8WVC6"/>
<dbReference type="BioMuta" id="DCAKD"/>
<dbReference type="DMDM" id="74730834"/>
<dbReference type="jPOST" id="Q8WVC6"/>
<dbReference type="MassIVE" id="Q8WVC6"/>
<dbReference type="PaxDb" id="9606-ENSP00000308515"/>
<dbReference type="PeptideAtlas" id="Q8WVC6"/>
<dbReference type="ProteomicsDB" id="74776">
    <molecule id="Q8WVC6-1"/>
</dbReference>
<dbReference type="ProteomicsDB" id="74777">
    <molecule id="Q8WVC6-2"/>
</dbReference>
<dbReference type="Pumba" id="Q8WVC6"/>
<dbReference type="Antibodypedia" id="29945">
    <property type="antibodies" value="173 antibodies from 20 providers"/>
</dbReference>
<dbReference type="DNASU" id="79877"/>
<dbReference type="Ensembl" id="ENST00000310604.9">
    <molecule id="Q8WVC6-1"/>
    <property type="protein sequence ID" value="ENSP00000308515.5"/>
    <property type="gene ID" value="ENSG00000172992.13"/>
</dbReference>
<dbReference type="Ensembl" id="ENST00000342350.10">
    <molecule id="Q8WVC6-1"/>
    <property type="protein sequence ID" value="ENSP00000341504.4"/>
    <property type="gene ID" value="ENSG00000172992.13"/>
</dbReference>
<dbReference type="Ensembl" id="ENST00000452796.7">
    <molecule id="Q8WVC6-1"/>
    <property type="protein sequence ID" value="ENSP00000413483.1"/>
    <property type="gene ID" value="ENSG00000172992.13"/>
</dbReference>
<dbReference type="Ensembl" id="ENST00000588499.6">
    <molecule id="Q8WVC6-1"/>
    <property type="protein sequence ID" value="ENSP00000467913.1"/>
    <property type="gene ID" value="ENSG00000172992.13"/>
</dbReference>
<dbReference type="Ensembl" id="ENST00000592902.6">
    <molecule id="Q8WVC6-2"/>
    <property type="protein sequence ID" value="ENSP00000510000.1"/>
    <property type="gene ID" value="ENSG00000172992.13"/>
</dbReference>
<dbReference type="Ensembl" id="ENST00000651974.1">
    <molecule id="Q8WVC6-1"/>
    <property type="protein sequence ID" value="ENSP00000498268.1"/>
    <property type="gene ID" value="ENSG00000172992.13"/>
</dbReference>
<dbReference type="Ensembl" id="ENST00000684937.1">
    <molecule id="Q8WVC6-2"/>
    <property type="protein sequence ID" value="ENSP00000510351.1"/>
    <property type="gene ID" value="ENSG00000172992.13"/>
</dbReference>
<dbReference type="Ensembl" id="ENST00000684999.1">
    <molecule id="Q8WVC6-1"/>
    <property type="protein sequence ID" value="ENSP00000510563.1"/>
    <property type="gene ID" value="ENSG00000172992.13"/>
</dbReference>
<dbReference type="Ensembl" id="ENST00000685712.1">
    <molecule id="Q8WVC6-2"/>
    <property type="protein sequence ID" value="ENSP00000510250.1"/>
    <property type="gene ID" value="ENSG00000172992.13"/>
</dbReference>
<dbReference type="Ensembl" id="ENST00000685986.1">
    <molecule id="Q8WVC6-2"/>
    <property type="protein sequence ID" value="ENSP00000509434.1"/>
    <property type="gene ID" value="ENSG00000172992.13"/>
</dbReference>
<dbReference type="Ensembl" id="ENST00000687414.1">
    <molecule id="Q8WVC6-2"/>
    <property type="protein sequence ID" value="ENSP00000508598.1"/>
    <property type="gene ID" value="ENSG00000172992.13"/>
</dbReference>
<dbReference type="Ensembl" id="ENST00000687463.1">
    <molecule id="Q8WVC6-2"/>
    <property type="protein sequence ID" value="ENSP00000510527.1"/>
    <property type="gene ID" value="ENSG00000172992.13"/>
</dbReference>
<dbReference type="Ensembl" id="ENST00000687525.1">
    <molecule id="Q8WVC6-1"/>
    <property type="protein sequence ID" value="ENSP00000509864.1"/>
    <property type="gene ID" value="ENSG00000172992.13"/>
</dbReference>
<dbReference type="Ensembl" id="ENST00000687739.1">
    <molecule id="Q8WVC6-1"/>
    <property type="protein sequence ID" value="ENSP00000510018.1"/>
    <property type="gene ID" value="ENSG00000172992.13"/>
</dbReference>
<dbReference type="Ensembl" id="ENST00000687955.1">
    <molecule id="Q8WVC6-2"/>
    <property type="protein sequence ID" value="ENSP00000509609.1"/>
    <property type="gene ID" value="ENSG00000172992.13"/>
</dbReference>
<dbReference type="Ensembl" id="ENST00000688577.1">
    <molecule id="Q8WVC6-2"/>
    <property type="protein sequence ID" value="ENSP00000508805.1"/>
    <property type="gene ID" value="ENSG00000172992.13"/>
</dbReference>
<dbReference type="Ensembl" id="ENST00000688601.1">
    <molecule id="Q8WVC6-2"/>
    <property type="protein sequence ID" value="ENSP00000510526.1"/>
    <property type="gene ID" value="ENSG00000172992.13"/>
</dbReference>
<dbReference type="Ensembl" id="ENST00000688897.1">
    <molecule id="Q8WVC6-1"/>
    <property type="protein sequence ID" value="ENSP00000509802.1"/>
    <property type="gene ID" value="ENSG00000172992.13"/>
</dbReference>
<dbReference type="Ensembl" id="ENST00000689764.1">
    <molecule id="Q8WVC6-2"/>
    <property type="protein sequence ID" value="ENSP00000508534.1"/>
    <property type="gene ID" value="ENSG00000172992.13"/>
</dbReference>
<dbReference type="Ensembl" id="ENST00000690580.1">
    <molecule id="Q8WVC6-2"/>
    <property type="protein sequence ID" value="ENSP00000509278.1"/>
    <property type="gene ID" value="ENSG00000172992.13"/>
</dbReference>
<dbReference type="Ensembl" id="ENST00000691739.1">
    <molecule id="Q8WVC6-2"/>
    <property type="protein sequence ID" value="ENSP00000509762.1"/>
    <property type="gene ID" value="ENSG00000172992.13"/>
</dbReference>
<dbReference type="Ensembl" id="ENST00000692009.1">
    <molecule id="Q8WVC6-1"/>
    <property type="protein sequence ID" value="ENSP00000509683.1"/>
    <property type="gene ID" value="ENSG00000172992.13"/>
</dbReference>
<dbReference type="Ensembl" id="ENST00000692180.1">
    <molecule id="Q8WVC6-1"/>
    <property type="protein sequence ID" value="ENSP00000510227.1"/>
    <property type="gene ID" value="ENSG00000172992.13"/>
</dbReference>
<dbReference type="Ensembl" id="ENST00000692907.1">
    <molecule id="Q8WVC6-2"/>
    <property type="protein sequence ID" value="ENSP00000510095.1"/>
    <property type="gene ID" value="ENSG00000172992.13"/>
</dbReference>
<dbReference type="Ensembl" id="ENST00000693065.1">
    <molecule id="Q8WVC6-1"/>
    <property type="protein sequence ID" value="ENSP00000509729.1"/>
    <property type="gene ID" value="ENSG00000172992.13"/>
</dbReference>
<dbReference type="Ensembl" id="ENST00000693328.1">
    <molecule id="Q8WVC6-2"/>
    <property type="protein sequence ID" value="ENSP00000508491.1"/>
    <property type="gene ID" value="ENSG00000172992.13"/>
</dbReference>
<dbReference type="GeneID" id="79877"/>
<dbReference type="KEGG" id="hsa:79877"/>
<dbReference type="MANE-Select" id="ENST00000651974.1">
    <property type="protein sequence ID" value="ENSP00000498268.1"/>
    <property type="RefSeq nucleotide sequence ID" value="NM_001288655.2"/>
    <property type="RefSeq protein sequence ID" value="NP_001275584.1"/>
</dbReference>
<dbReference type="UCSC" id="uc002ihx.3">
    <molecule id="Q8WVC6-1"/>
    <property type="organism name" value="human"/>
</dbReference>
<dbReference type="AGR" id="HGNC:26238"/>
<dbReference type="CTD" id="79877"/>
<dbReference type="DisGeNET" id="79877"/>
<dbReference type="GeneCards" id="DCAKD"/>
<dbReference type="HGNC" id="HGNC:26238">
    <property type="gene designation" value="DCAKD"/>
</dbReference>
<dbReference type="HPA" id="ENSG00000172992">
    <property type="expression patterns" value="Low tissue specificity"/>
</dbReference>
<dbReference type="neXtProt" id="NX_Q8WVC6"/>
<dbReference type="OpenTargets" id="ENSG00000172992"/>
<dbReference type="PharmGKB" id="PA142672013"/>
<dbReference type="VEuPathDB" id="HostDB:ENSG00000172992"/>
<dbReference type="eggNOG" id="KOG3220">
    <property type="taxonomic scope" value="Eukaryota"/>
</dbReference>
<dbReference type="GeneTree" id="ENSGT00550000075038"/>
<dbReference type="InParanoid" id="Q8WVC6"/>
<dbReference type="OMA" id="CQMDIEQ"/>
<dbReference type="OrthoDB" id="247245at2759"/>
<dbReference type="PAN-GO" id="Q8WVC6">
    <property type="GO annotations" value="2 GO annotations based on evolutionary models"/>
</dbReference>
<dbReference type="PhylomeDB" id="Q8WVC6"/>
<dbReference type="TreeFam" id="TF314815"/>
<dbReference type="PathwayCommons" id="Q8WVC6"/>
<dbReference type="Reactome" id="R-HSA-196783">
    <property type="pathway name" value="Coenzyme A biosynthesis"/>
</dbReference>
<dbReference type="SignaLink" id="Q8WVC6"/>
<dbReference type="BioGRID-ORCS" id="79877">
    <property type="hits" value="15 hits in 1181 CRISPR screens"/>
</dbReference>
<dbReference type="CD-CODE" id="FB4E32DD">
    <property type="entry name" value="Presynaptic clusters and postsynaptic densities"/>
</dbReference>
<dbReference type="ChiTaRS" id="DCAKD">
    <property type="organism name" value="human"/>
</dbReference>
<dbReference type="GenomeRNAi" id="79877"/>
<dbReference type="Pharos" id="Q8WVC6">
    <property type="development level" value="Tdark"/>
</dbReference>
<dbReference type="PRO" id="PR:Q8WVC6"/>
<dbReference type="Proteomes" id="UP000005640">
    <property type="component" value="Chromosome 17"/>
</dbReference>
<dbReference type="RNAct" id="Q8WVC6">
    <property type="molecule type" value="protein"/>
</dbReference>
<dbReference type="Bgee" id="ENSG00000172992">
    <property type="expression patterns" value="Expressed in cortical plate and 140 other cell types or tissues"/>
</dbReference>
<dbReference type="ExpressionAtlas" id="Q8WVC6">
    <property type="expression patterns" value="baseline and differential"/>
</dbReference>
<dbReference type="GO" id="GO:0016020">
    <property type="term" value="C:membrane"/>
    <property type="evidence" value="ECO:0007005"/>
    <property type="project" value="UniProtKB"/>
</dbReference>
<dbReference type="GO" id="GO:0005741">
    <property type="term" value="C:mitochondrial outer membrane"/>
    <property type="evidence" value="ECO:0000304"/>
    <property type="project" value="Reactome"/>
</dbReference>
<dbReference type="GO" id="GO:0005524">
    <property type="term" value="F:ATP binding"/>
    <property type="evidence" value="ECO:0007669"/>
    <property type="project" value="UniProtKB-KW"/>
</dbReference>
<dbReference type="GO" id="GO:0004140">
    <property type="term" value="F:dephospho-CoA kinase activity"/>
    <property type="evidence" value="ECO:0000269"/>
    <property type="project" value="Reactome"/>
</dbReference>
<dbReference type="GO" id="GO:0015937">
    <property type="term" value="P:coenzyme A biosynthetic process"/>
    <property type="evidence" value="ECO:0000318"/>
    <property type="project" value="GO_Central"/>
</dbReference>
<dbReference type="CDD" id="cd02022">
    <property type="entry name" value="DPCK"/>
    <property type="match status" value="1"/>
</dbReference>
<dbReference type="FunFam" id="3.40.50.300:FF:000485">
    <property type="entry name" value="Dephospho-CoA kinase CAB5"/>
    <property type="match status" value="1"/>
</dbReference>
<dbReference type="Gene3D" id="3.40.50.300">
    <property type="entry name" value="P-loop containing nucleotide triphosphate hydrolases"/>
    <property type="match status" value="1"/>
</dbReference>
<dbReference type="HAMAP" id="MF_00376">
    <property type="entry name" value="Dephospho_CoA_kinase"/>
    <property type="match status" value="1"/>
</dbReference>
<dbReference type="InterPro" id="IPR001977">
    <property type="entry name" value="Depp_CoAkinase"/>
</dbReference>
<dbReference type="InterPro" id="IPR027417">
    <property type="entry name" value="P-loop_NTPase"/>
</dbReference>
<dbReference type="NCBIfam" id="TIGR00152">
    <property type="entry name" value="dephospho-CoA kinase"/>
    <property type="match status" value="1"/>
</dbReference>
<dbReference type="PANTHER" id="PTHR10695:SF46">
    <property type="entry name" value="BIFUNCTIONAL COENZYME A SYNTHASE-RELATED"/>
    <property type="match status" value="1"/>
</dbReference>
<dbReference type="PANTHER" id="PTHR10695">
    <property type="entry name" value="DEPHOSPHO-COA KINASE-RELATED"/>
    <property type="match status" value="1"/>
</dbReference>
<dbReference type="Pfam" id="PF01121">
    <property type="entry name" value="CoaE"/>
    <property type="match status" value="1"/>
</dbReference>
<dbReference type="SUPFAM" id="SSF52540">
    <property type="entry name" value="P-loop containing nucleoside triphosphate hydrolases"/>
    <property type="match status" value="1"/>
</dbReference>
<dbReference type="PROSITE" id="PS51219">
    <property type="entry name" value="DPCK"/>
    <property type="match status" value="1"/>
</dbReference>
<gene>
    <name type="primary">DCAKD</name>
</gene>